<comment type="subcellular location">
    <subcellularLocation>
        <location>Secreted</location>
    </subcellularLocation>
</comment>
<comment type="tissue specificity">
    <text>Expressed by the venom duct.</text>
</comment>
<comment type="domain">
    <text>The cysteine framework is III (CC-C-C-CC). Classified in the M-2 branch, since 2 residues stand between the fourth and the fifth cysteine residues.</text>
</comment>
<comment type="mass spectrometry"/>
<comment type="similarity">
    <text evidence="5">Belongs to the conotoxin M superfamily.</text>
</comment>
<proteinExistence type="evidence at protein level"/>
<sequence>CCELPCHGCVPCCWP</sequence>
<feature type="peptide" id="PRO_0000044500" description="BtIIIB">
    <location>
        <begin position="1"/>
        <end position="15"/>
    </location>
</feature>
<feature type="disulfide bond" evidence="2">
    <location>
        <begin position="1"/>
        <end position="13"/>
    </location>
</feature>
<feature type="disulfide bond" evidence="2">
    <location>
        <begin position="2"/>
        <end position="9"/>
    </location>
</feature>
<feature type="disulfide bond" evidence="2">
    <location>
        <begin position="6"/>
        <end position="12"/>
    </location>
</feature>
<keyword id="KW-0903">Direct protein sequencing</keyword>
<keyword id="KW-1015">Disulfide bond</keyword>
<keyword id="KW-0528">Neurotoxin</keyword>
<keyword id="KW-0964">Secreted</keyword>
<keyword id="KW-0800">Toxin</keyword>
<reference key="1">
    <citation type="journal article" date="1999" name="J. Nat. Toxins">
        <title>Studies on conotoxins of Conus betulinus.</title>
        <authorList>
            <person name="Chen J.-S."/>
            <person name="Fan C.-X."/>
            <person name="Hu K.-P."/>
            <person name="Wei K.-H."/>
            <person name="Zhong M.-N."/>
        </authorList>
    </citation>
    <scope>PROTEIN SEQUENCE</scope>
    <scope>MASS SPECTROMETRY</scope>
    <source>
        <tissue>Venom</tissue>
    </source>
</reference>
<reference key="2">
    <citation type="journal article" date="2005" name="Acta Chim. Sin.">
        <title>Purification, sequence and disulfide bonding pattern of a novel conotoxin BtIIIB.</title>
        <authorList>
            <person name="Zhao T.-Y."/>
            <person name="Cao Y."/>
            <person name="Dai X.-D."/>
            <person name="Fan C.-X."/>
            <person name="Chen J.-S."/>
        </authorList>
    </citation>
    <scope>PROTEIN SEQUENCE</scope>
    <scope>DISULFIDE BONDS</scope>
</reference>
<dbReference type="ConoServer" id="1481">
    <property type="toxin name" value="BeTXIb"/>
</dbReference>
<dbReference type="GO" id="GO:0005576">
    <property type="term" value="C:extracellular region"/>
    <property type="evidence" value="ECO:0007669"/>
    <property type="project" value="UniProtKB-SubCell"/>
</dbReference>
<dbReference type="GO" id="GO:0090729">
    <property type="term" value="F:toxin activity"/>
    <property type="evidence" value="ECO:0007669"/>
    <property type="project" value="UniProtKB-KW"/>
</dbReference>
<organism>
    <name type="scientific">Conus betulinus</name>
    <name type="common">Beech cone</name>
    <dbReference type="NCBI Taxonomy" id="89764"/>
    <lineage>
        <taxon>Eukaryota</taxon>
        <taxon>Metazoa</taxon>
        <taxon>Spiralia</taxon>
        <taxon>Lophotrochozoa</taxon>
        <taxon>Mollusca</taxon>
        <taxon>Gastropoda</taxon>
        <taxon>Caenogastropoda</taxon>
        <taxon>Neogastropoda</taxon>
        <taxon>Conoidea</taxon>
        <taxon>Conidae</taxon>
        <taxon>Conus</taxon>
        <taxon>Dendroconus</taxon>
    </lineage>
</organism>
<name>M3B_CONBE</name>
<protein>
    <recommendedName>
        <fullName evidence="4">BtIIIB</fullName>
    </recommendedName>
    <alternativeName>
        <fullName evidence="3">Conotoxin BeTXIb</fullName>
    </alternativeName>
</protein>
<accession>P58624</accession>
<evidence type="ECO:0000269" key="1">
    <source>
    </source>
</evidence>
<evidence type="ECO:0000269" key="2">
    <source ref="2"/>
</evidence>
<evidence type="ECO:0000303" key="3">
    <source>
    </source>
</evidence>
<evidence type="ECO:0000303" key="4">
    <source ref="2"/>
</evidence>
<evidence type="ECO:0000305" key="5"/>